<keyword id="KW-1185">Reference proteome</keyword>
<keyword id="KW-0687">Ribonucleoprotein</keyword>
<keyword id="KW-0689">Ribosomal protein</keyword>
<keyword id="KW-0694">RNA-binding</keyword>
<keyword id="KW-0699">rRNA-binding</keyword>
<protein>
    <recommendedName>
        <fullName evidence="1">Large ribosomal subunit protein uL2</fullName>
    </recommendedName>
    <alternativeName>
        <fullName evidence="3">50S ribosomal protein L2</fullName>
    </alternativeName>
</protein>
<evidence type="ECO:0000255" key="1">
    <source>
        <dbReference type="HAMAP-Rule" id="MF_01320"/>
    </source>
</evidence>
<evidence type="ECO:0000256" key="2">
    <source>
        <dbReference type="SAM" id="MobiDB-lite"/>
    </source>
</evidence>
<evidence type="ECO:0000305" key="3"/>
<sequence length="275" mass="30103">MALVKVKPTSAGRRAVVKVVNKDLHKGAPYAPLLEKQIQNAGRNNNGHITTRHKGGGHKHHYRVVDFRRNKDGIVAKVERIEYDPNRTAHIALLCYADGERRYIIAPRGLKAGAEVVNGAEAPIKAGNCLPIRNIPVGTTIHCIEMQPGKGAQLARSAGASVMLLAREGSYAQLRLRSGEIRKVHIDCRATVGEVGNEEHSLRKLGKAGATRWRGIRPTVRGVAMNPVDHPHGGGEGRTGEGRVPVSPWGTPAKGYRTRNNKRTDNMIVRRRHSK</sequence>
<dbReference type="EMBL" id="CP001154">
    <property type="protein sequence ID" value="ACO73251.1"/>
    <property type="molecule type" value="Genomic_DNA"/>
</dbReference>
<dbReference type="RefSeq" id="WP_012695745.1">
    <property type="nucleotide sequence ID" value="NC_012559.1"/>
</dbReference>
<dbReference type="SMR" id="C1DAS0"/>
<dbReference type="STRING" id="557598.LHK_00256"/>
<dbReference type="GeneID" id="75109504"/>
<dbReference type="KEGG" id="lhk:LHK_00256"/>
<dbReference type="eggNOG" id="COG0090">
    <property type="taxonomic scope" value="Bacteria"/>
</dbReference>
<dbReference type="HOGENOM" id="CLU_036235_2_1_4"/>
<dbReference type="Proteomes" id="UP000002010">
    <property type="component" value="Chromosome"/>
</dbReference>
<dbReference type="GO" id="GO:0015934">
    <property type="term" value="C:large ribosomal subunit"/>
    <property type="evidence" value="ECO:0007669"/>
    <property type="project" value="InterPro"/>
</dbReference>
<dbReference type="GO" id="GO:0019843">
    <property type="term" value="F:rRNA binding"/>
    <property type="evidence" value="ECO:0007669"/>
    <property type="project" value="UniProtKB-UniRule"/>
</dbReference>
<dbReference type="GO" id="GO:0003735">
    <property type="term" value="F:structural constituent of ribosome"/>
    <property type="evidence" value="ECO:0007669"/>
    <property type="project" value="InterPro"/>
</dbReference>
<dbReference type="GO" id="GO:0016740">
    <property type="term" value="F:transferase activity"/>
    <property type="evidence" value="ECO:0007669"/>
    <property type="project" value="InterPro"/>
</dbReference>
<dbReference type="GO" id="GO:0002181">
    <property type="term" value="P:cytoplasmic translation"/>
    <property type="evidence" value="ECO:0007669"/>
    <property type="project" value="TreeGrafter"/>
</dbReference>
<dbReference type="FunFam" id="2.30.30.30:FF:000001">
    <property type="entry name" value="50S ribosomal protein L2"/>
    <property type="match status" value="1"/>
</dbReference>
<dbReference type="FunFam" id="2.40.50.140:FF:000003">
    <property type="entry name" value="50S ribosomal protein L2"/>
    <property type="match status" value="1"/>
</dbReference>
<dbReference type="FunFam" id="4.10.950.10:FF:000001">
    <property type="entry name" value="50S ribosomal protein L2"/>
    <property type="match status" value="1"/>
</dbReference>
<dbReference type="Gene3D" id="2.30.30.30">
    <property type="match status" value="1"/>
</dbReference>
<dbReference type="Gene3D" id="2.40.50.140">
    <property type="entry name" value="Nucleic acid-binding proteins"/>
    <property type="match status" value="1"/>
</dbReference>
<dbReference type="Gene3D" id="4.10.950.10">
    <property type="entry name" value="Ribosomal protein L2, domain 3"/>
    <property type="match status" value="1"/>
</dbReference>
<dbReference type="HAMAP" id="MF_01320_B">
    <property type="entry name" value="Ribosomal_uL2_B"/>
    <property type="match status" value="1"/>
</dbReference>
<dbReference type="InterPro" id="IPR012340">
    <property type="entry name" value="NA-bd_OB-fold"/>
</dbReference>
<dbReference type="InterPro" id="IPR014722">
    <property type="entry name" value="Rib_uL2_dom2"/>
</dbReference>
<dbReference type="InterPro" id="IPR002171">
    <property type="entry name" value="Ribosomal_uL2"/>
</dbReference>
<dbReference type="InterPro" id="IPR005880">
    <property type="entry name" value="Ribosomal_uL2_bac/org-type"/>
</dbReference>
<dbReference type="InterPro" id="IPR022669">
    <property type="entry name" value="Ribosomal_uL2_C"/>
</dbReference>
<dbReference type="InterPro" id="IPR022671">
    <property type="entry name" value="Ribosomal_uL2_CS"/>
</dbReference>
<dbReference type="InterPro" id="IPR014726">
    <property type="entry name" value="Ribosomal_uL2_dom3"/>
</dbReference>
<dbReference type="InterPro" id="IPR022666">
    <property type="entry name" value="Ribosomal_uL2_RNA-bd_dom"/>
</dbReference>
<dbReference type="InterPro" id="IPR008991">
    <property type="entry name" value="Translation_prot_SH3-like_sf"/>
</dbReference>
<dbReference type="NCBIfam" id="TIGR01171">
    <property type="entry name" value="rplB_bact"/>
    <property type="match status" value="1"/>
</dbReference>
<dbReference type="PANTHER" id="PTHR13691:SF5">
    <property type="entry name" value="LARGE RIBOSOMAL SUBUNIT PROTEIN UL2M"/>
    <property type="match status" value="1"/>
</dbReference>
<dbReference type="PANTHER" id="PTHR13691">
    <property type="entry name" value="RIBOSOMAL PROTEIN L2"/>
    <property type="match status" value="1"/>
</dbReference>
<dbReference type="Pfam" id="PF00181">
    <property type="entry name" value="Ribosomal_L2"/>
    <property type="match status" value="1"/>
</dbReference>
<dbReference type="Pfam" id="PF03947">
    <property type="entry name" value="Ribosomal_L2_C"/>
    <property type="match status" value="1"/>
</dbReference>
<dbReference type="PIRSF" id="PIRSF002158">
    <property type="entry name" value="Ribosomal_L2"/>
    <property type="match status" value="1"/>
</dbReference>
<dbReference type="SMART" id="SM01383">
    <property type="entry name" value="Ribosomal_L2"/>
    <property type="match status" value="1"/>
</dbReference>
<dbReference type="SMART" id="SM01382">
    <property type="entry name" value="Ribosomal_L2_C"/>
    <property type="match status" value="1"/>
</dbReference>
<dbReference type="SUPFAM" id="SSF50249">
    <property type="entry name" value="Nucleic acid-binding proteins"/>
    <property type="match status" value="1"/>
</dbReference>
<dbReference type="SUPFAM" id="SSF50104">
    <property type="entry name" value="Translation proteins SH3-like domain"/>
    <property type="match status" value="1"/>
</dbReference>
<dbReference type="PROSITE" id="PS00467">
    <property type="entry name" value="RIBOSOMAL_L2"/>
    <property type="match status" value="1"/>
</dbReference>
<reference key="1">
    <citation type="journal article" date="2009" name="PLoS Genet.">
        <title>The complete genome and proteome of Laribacter hongkongensis reveal potential mechanisms for adaptations to different temperatures and habitats.</title>
        <authorList>
            <person name="Woo P.C.Y."/>
            <person name="Lau S.K.P."/>
            <person name="Tse H."/>
            <person name="Teng J.L.L."/>
            <person name="Curreem S.O."/>
            <person name="Tsang A.K.L."/>
            <person name="Fan R.Y.Y."/>
            <person name="Wong G.K.M."/>
            <person name="Huang Y."/>
            <person name="Loman N.J."/>
            <person name="Snyder L.A.S."/>
            <person name="Cai J.J."/>
            <person name="Huang J.-D."/>
            <person name="Mak W."/>
            <person name="Pallen M.J."/>
            <person name="Lok S."/>
            <person name="Yuen K.-Y."/>
        </authorList>
    </citation>
    <scope>NUCLEOTIDE SEQUENCE [LARGE SCALE GENOMIC DNA]</scope>
    <source>
        <strain>HLHK9</strain>
    </source>
</reference>
<organism>
    <name type="scientific">Laribacter hongkongensis (strain HLHK9)</name>
    <dbReference type="NCBI Taxonomy" id="557598"/>
    <lineage>
        <taxon>Bacteria</taxon>
        <taxon>Pseudomonadati</taxon>
        <taxon>Pseudomonadota</taxon>
        <taxon>Betaproteobacteria</taxon>
        <taxon>Neisseriales</taxon>
        <taxon>Aquaspirillaceae</taxon>
        <taxon>Laribacter</taxon>
    </lineage>
</organism>
<comment type="function">
    <text evidence="1">One of the primary rRNA binding proteins. Required for association of the 30S and 50S subunits to form the 70S ribosome, for tRNA binding and peptide bond formation. It has been suggested to have peptidyltransferase activity; this is somewhat controversial. Makes several contacts with the 16S rRNA in the 70S ribosome.</text>
</comment>
<comment type="subunit">
    <text evidence="1">Part of the 50S ribosomal subunit. Forms a bridge to the 30S subunit in the 70S ribosome.</text>
</comment>
<comment type="similarity">
    <text evidence="1">Belongs to the universal ribosomal protein uL2 family.</text>
</comment>
<proteinExistence type="inferred from homology"/>
<accession>C1DAS0</accession>
<gene>
    <name evidence="1" type="primary">rplB</name>
    <name type="ordered locus">LHK_00256</name>
</gene>
<feature type="chain" id="PRO_1000165754" description="Large ribosomal subunit protein uL2">
    <location>
        <begin position="1"/>
        <end position="275"/>
    </location>
</feature>
<feature type="region of interest" description="Disordered" evidence="2">
    <location>
        <begin position="223"/>
        <end position="275"/>
    </location>
</feature>
<feature type="compositionally biased region" description="Basic and acidic residues" evidence="2">
    <location>
        <begin position="229"/>
        <end position="241"/>
    </location>
</feature>
<name>RL2_LARHH</name>